<keyword id="KW-1017">Isopeptide bond</keyword>
<keyword id="KW-1185">Reference proteome</keyword>
<keyword id="KW-0833">Ubl conjugation pathway</keyword>
<protein>
    <recommendedName>
        <fullName evidence="1">Prokaryotic ubiquitin-like protein Pup</fullName>
    </recommendedName>
    <alternativeName>
        <fullName evidence="1">Bacterial ubiquitin-like modifier</fullName>
    </alternativeName>
</protein>
<name>PUP_CORDI</name>
<evidence type="ECO:0000255" key="1">
    <source>
        <dbReference type="HAMAP-Rule" id="MF_02106"/>
    </source>
</evidence>
<evidence type="ECO:0000256" key="2">
    <source>
        <dbReference type="SAM" id="MobiDB-lite"/>
    </source>
</evidence>
<accession>Q6NH94</accession>
<gene>
    <name evidence="1" type="primary">pup</name>
    <name type="ordered locus">DIP1246</name>
</gene>
<organism>
    <name type="scientific">Corynebacterium diphtheriae (strain ATCC 700971 / NCTC 13129 / Biotype gravis)</name>
    <dbReference type="NCBI Taxonomy" id="257309"/>
    <lineage>
        <taxon>Bacteria</taxon>
        <taxon>Bacillati</taxon>
        <taxon>Actinomycetota</taxon>
        <taxon>Actinomycetes</taxon>
        <taxon>Mycobacteriales</taxon>
        <taxon>Corynebacteriaceae</taxon>
        <taxon>Corynebacterium</taxon>
    </lineage>
</organism>
<comment type="function">
    <text evidence="1">Protein modifier that is covalently attached to lysine residues of substrate proteins, thereby targeting them for proteasomal degradation. The tagging system is termed pupylation.</text>
</comment>
<comment type="pathway">
    <text evidence="1">Protein degradation; proteasomal Pup-dependent pathway.</text>
</comment>
<comment type="subunit">
    <text evidence="1">Strongly interacts with the proteasome-associated ATPase ARC through a hydrophobic interface; the interacting region of Pup lies in its C-terminal half. There is one Pup binding site per ARC hexamer ring.</text>
</comment>
<comment type="domain">
    <text evidence="1">The N-terminal unstructured half of Pup provides a signal required to initiate unfolding and degradation by the proteasome but is not needed for pupylation, while the C-terminal helical half of Pup interacts with ARC to target proteins to the proteasome.</text>
</comment>
<comment type="PTM">
    <text evidence="1">Is modified by deamidation of its C-terminal glutamine to glutamate by the deamidase Dop, a prerequisite to the subsequent pupylation process.</text>
</comment>
<comment type="similarity">
    <text evidence="1">Belongs to the prokaryotic ubiquitin-like protein family.</text>
</comment>
<feature type="chain" id="PRO_0000390574" description="Prokaryotic ubiquitin-like protein Pup">
    <location>
        <begin position="1"/>
        <end position="64"/>
    </location>
</feature>
<feature type="region of interest" description="Disordered" evidence="2">
    <location>
        <begin position="1"/>
        <end position="32"/>
    </location>
</feature>
<feature type="region of interest" description="ARC ATPase binding" evidence="1">
    <location>
        <begin position="20"/>
        <end position="58"/>
    </location>
</feature>
<feature type="compositionally biased region" description="Polar residues" evidence="2">
    <location>
        <begin position="1"/>
        <end position="10"/>
    </location>
</feature>
<feature type="modified residue" description="Deamidated glutamine" evidence="1">
    <location>
        <position position="64"/>
    </location>
</feature>
<feature type="cross-link" description="Isoglutamyl lysine isopeptide (Gln-Lys) (interchain with K-? in acceptor proteins)" evidence="1">
    <location>
        <position position="64"/>
    </location>
</feature>
<dbReference type="EMBL" id="BX248357">
    <property type="protein sequence ID" value="CAE49775.1"/>
    <property type="molecule type" value="Genomic_DNA"/>
</dbReference>
<dbReference type="RefSeq" id="WP_010934924.1">
    <property type="nucleotide sequence ID" value="NC_002935.2"/>
</dbReference>
<dbReference type="SMR" id="Q6NH94"/>
<dbReference type="STRING" id="257309.DIP1246"/>
<dbReference type="KEGG" id="cdi:DIP1246"/>
<dbReference type="HOGENOM" id="CLU_183816_1_0_11"/>
<dbReference type="UniPathway" id="UPA00997"/>
<dbReference type="Proteomes" id="UP000002198">
    <property type="component" value="Chromosome"/>
</dbReference>
<dbReference type="GO" id="GO:0070628">
    <property type="term" value="F:proteasome binding"/>
    <property type="evidence" value="ECO:0007669"/>
    <property type="project" value="UniProtKB-UniRule"/>
</dbReference>
<dbReference type="GO" id="GO:0031386">
    <property type="term" value="F:protein tag activity"/>
    <property type="evidence" value="ECO:0007669"/>
    <property type="project" value="UniProtKB-UniRule"/>
</dbReference>
<dbReference type="GO" id="GO:0019941">
    <property type="term" value="P:modification-dependent protein catabolic process"/>
    <property type="evidence" value="ECO:0007669"/>
    <property type="project" value="UniProtKB-UniRule"/>
</dbReference>
<dbReference type="GO" id="GO:0010498">
    <property type="term" value="P:proteasomal protein catabolic process"/>
    <property type="evidence" value="ECO:0007669"/>
    <property type="project" value="UniProtKB-UniRule"/>
</dbReference>
<dbReference type="GO" id="GO:0070490">
    <property type="term" value="P:protein pupylation"/>
    <property type="evidence" value="ECO:0007669"/>
    <property type="project" value="UniProtKB-UniRule"/>
</dbReference>
<dbReference type="HAMAP" id="MF_02106">
    <property type="entry name" value="Pup"/>
    <property type="match status" value="1"/>
</dbReference>
<dbReference type="InterPro" id="IPR008515">
    <property type="entry name" value="Ubiquitin-like_Pup"/>
</dbReference>
<dbReference type="NCBIfam" id="TIGR03687">
    <property type="entry name" value="pupylate_cterm"/>
    <property type="match status" value="1"/>
</dbReference>
<dbReference type="Pfam" id="PF05639">
    <property type="entry name" value="Pup"/>
    <property type="match status" value="1"/>
</dbReference>
<sequence>MNQNGSQIHSDGNGHSDDTDTPGVSAGQVSVNTAGVDDLLDEIDGLLESNAEEFVRSYVQKGGQ</sequence>
<proteinExistence type="inferred from homology"/>
<reference key="1">
    <citation type="journal article" date="2003" name="Nucleic Acids Res.">
        <title>The complete genome sequence and analysis of Corynebacterium diphtheriae NCTC13129.</title>
        <authorList>
            <person name="Cerdeno-Tarraga A.-M."/>
            <person name="Efstratiou A."/>
            <person name="Dover L.G."/>
            <person name="Holden M.T.G."/>
            <person name="Pallen M.J."/>
            <person name="Bentley S.D."/>
            <person name="Besra G.S."/>
            <person name="Churcher C.M."/>
            <person name="James K.D."/>
            <person name="De Zoysa A."/>
            <person name="Chillingworth T."/>
            <person name="Cronin A."/>
            <person name="Dowd L."/>
            <person name="Feltwell T."/>
            <person name="Hamlin N."/>
            <person name="Holroyd S."/>
            <person name="Jagels K."/>
            <person name="Moule S."/>
            <person name="Quail M.A."/>
            <person name="Rabbinowitsch E."/>
            <person name="Rutherford K.M."/>
            <person name="Thomson N.R."/>
            <person name="Unwin L."/>
            <person name="Whitehead S."/>
            <person name="Barrell B.G."/>
            <person name="Parkhill J."/>
        </authorList>
    </citation>
    <scope>NUCLEOTIDE SEQUENCE [LARGE SCALE GENOMIC DNA]</scope>
    <source>
        <strain>ATCC 700971 / NCTC 13129 / Biotype gravis</strain>
    </source>
</reference>